<sequence length="337" mass="39073">MRRKTLKYLTFFLLFIFLTSFVLNYSNTGVPSAWFPKQMLLELSENFRRFIKSQPCTCRHCISQDKVSYWFDQRFNKTMQPLLTVHNALMEEDTYRWWLRLQRERKPNNLSDTVKELFRLVPGNVDPMLNKRLVGCRRCAVVGNSGNLKDSSYGPEIDSHDFVLRMNKAPTVGFEADVGSRTTHHLVYPESFRELGENVNMVLVPFKTTDLQWVISATTTGTITHTYVPVPPKIKVKQEKILIYHPAFIKYVFDNWLQGHGRYPSTGILSIIFSIHICDEVDLYGFGADSKGNWHHYWENNPSAGAFRKTGVHDGDFEYNITTTLAAINKIRIFKGR</sequence>
<feature type="chain" id="PRO_0000149254" description="CMP-N-acetylneuraminate-beta-galactosamide-alpha-2,3-sialyltransferase 1">
    <location>
        <begin position="1"/>
        <end position="337"/>
    </location>
</feature>
<feature type="topological domain" description="Cytoplasmic" evidence="3">
    <location>
        <begin position="1"/>
        <end position="4"/>
    </location>
</feature>
<feature type="transmembrane region" description="Helical; Signal-anchor for type II membrane protein" evidence="3">
    <location>
        <begin position="5"/>
        <end position="25"/>
    </location>
</feature>
<feature type="topological domain" description="Lumenal" evidence="3">
    <location>
        <begin position="26"/>
        <end position="337"/>
    </location>
</feature>
<feature type="binding site" evidence="1">
    <location>
        <position position="102"/>
    </location>
    <ligand>
        <name>substrate</name>
    </ligand>
</feature>
<feature type="binding site" evidence="1">
    <location>
        <position position="144"/>
    </location>
    <ligand>
        <name>substrate</name>
    </ligand>
</feature>
<feature type="binding site" evidence="1">
    <location>
        <position position="167"/>
    </location>
    <ligand>
        <name>substrate</name>
    </ligand>
</feature>
<feature type="binding site" evidence="1">
    <location>
        <position position="227"/>
    </location>
    <ligand>
        <name>substrate</name>
    </ligand>
</feature>
<feature type="binding site" evidence="1">
    <location>
        <position position="263"/>
    </location>
    <ligand>
        <name>substrate</name>
    </ligand>
</feature>
<feature type="binding site" evidence="1">
    <location>
        <position position="267"/>
    </location>
    <ligand>
        <name>substrate</name>
    </ligand>
</feature>
<feature type="binding site" evidence="1">
    <location>
        <position position="287"/>
    </location>
    <ligand>
        <name>substrate</name>
    </ligand>
</feature>
<feature type="binding site" evidence="1">
    <location>
        <position position="296"/>
    </location>
    <ligand>
        <name>substrate</name>
    </ligand>
</feature>
<feature type="binding site" evidence="1">
    <location>
        <position position="313"/>
    </location>
    <ligand>
        <name>substrate</name>
    </ligand>
</feature>
<feature type="glycosylation site" description="N-linked (GlcNAc...) asparagine" evidence="3">
    <location>
        <position position="76"/>
    </location>
</feature>
<feature type="glycosylation site" description="N-linked (GlcNAc...) asparagine" evidence="3">
    <location>
        <position position="109"/>
    </location>
</feature>
<feature type="glycosylation site" description="N-linked (GlcNAc...) asparagine" evidence="3">
    <location>
        <position position="320"/>
    </location>
</feature>
<feature type="disulfide bond" evidence="1">
    <location>
        <begin position="56"/>
        <end position="61"/>
    </location>
</feature>
<feature type="disulfide bond" evidence="1">
    <location>
        <begin position="58"/>
        <end position="136"/>
    </location>
</feature>
<feature type="disulfide bond" evidence="1">
    <location>
        <begin position="139"/>
        <end position="278"/>
    </location>
</feature>
<keyword id="KW-1015">Disulfide bond</keyword>
<keyword id="KW-0325">Glycoprotein</keyword>
<keyword id="KW-0328">Glycosyltransferase</keyword>
<keyword id="KW-0333">Golgi apparatus</keyword>
<keyword id="KW-0443">Lipid metabolism</keyword>
<keyword id="KW-0472">Membrane</keyword>
<keyword id="KW-1185">Reference proteome</keyword>
<keyword id="KW-0964">Secreted</keyword>
<keyword id="KW-0735">Signal-anchor</keyword>
<keyword id="KW-0808">Transferase</keyword>
<keyword id="KW-0812">Transmembrane</keyword>
<keyword id="KW-1133">Transmembrane helix</keyword>
<protein>
    <recommendedName>
        <fullName>CMP-N-acetylneuraminate-beta-galactosamide-alpha-2,3-sialyltransferase 1</fullName>
        <shortName>Alpha 2,3-ST 1</shortName>
        <shortName>Beta-galactoside alpha-2,3-sialyltransferase 1</shortName>
        <ecNumber evidence="4 5 6">2.4.3.4</ecNumber>
    </recommendedName>
    <alternativeName>
        <fullName>Gal-NAc6S</fullName>
    </alternativeName>
    <alternativeName>
        <fullName>Gal-beta-1,3-GalNAc-alpha-2,3-sialyltransferase</fullName>
    </alternativeName>
    <alternativeName>
        <fullName>Monosialoganglioside sialyltransferase</fullName>
        <ecNumber evidence="10 11">2.4.3.2</ecNumber>
    </alternativeName>
    <alternativeName>
        <fullName>ST3Gal I</fullName>
        <shortName>ST3GalI</shortName>
    </alternativeName>
    <alternativeName>
        <fullName>ST3GalA.1</fullName>
    </alternativeName>
    <alternativeName>
        <fullName>ST3O</fullName>
    </alternativeName>
    <alternativeName>
        <fullName>Sialyltransferase 4A</fullName>
        <shortName>SIAT4-A</shortName>
    </alternativeName>
</protein>
<organism>
    <name type="scientific">Mus musculus</name>
    <name type="common">Mouse</name>
    <dbReference type="NCBI Taxonomy" id="10090"/>
    <lineage>
        <taxon>Eukaryota</taxon>
        <taxon>Metazoa</taxon>
        <taxon>Chordata</taxon>
        <taxon>Craniata</taxon>
        <taxon>Vertebrata</taxon>
        <taxon>Euteleostomi</taxon>
        <taxon>Mammalia</taxon>
        <taxon>Eutheria</taxon>
        <taxon>Euarchontoglires</taxon>
        <taxon>Glires</taxon>
        <taxon>Rodentia</taxon>
        <taxon>Myomorpha</taxon>
        <taxon>Muroidea</taxon>
        <taxon>Muridae</taxon>
        <taxon>Murinae</taxon>
        <taxon>Mus</taxon>
        <taxon>Mus</taxon>
    </lineage>
</organism>
<gene>
    <name type="primary">St3gal1</name>
    <name type="synonym">Siat4</name>
    <name type="synonym">Siat4a</name>
</gene>
<name>SIA4A_MOUSE</name>
<accession>P54751</accession>
<accession>Q11202</accession>
<proteinExistence type="evidence at protein level"/>
<reference key="1">
    <citation type="journal article" date="1993" name="Eur. J. Biochem.">
        <title>Molecular cloning and expression of Gal beta 1,3GalNAc alpha 2,3-sialyltransferase from mouse brain.</title>
        <authorList>
            <person name="Lee Y.-C."/>
            <person name="Kurosawa N."/>
            <person name="Hamamoto T."/>
            <person name="Nakaoka T."/>
            <person name="Tsuji S."/>
        </authorList>
    </citation>
    <scope>NUCLEOTIDE SEQUENCE [MRNA]</scope>
    <scope>FUNCTION</scope>
    <scope>CATALYTIC ACTIVITY</scope>
    <scope>SUBSTRATE SPECIFICITY</scope>
    <scope>BIOPHYSICOCHEMICAL PROPERTIES</scope>
    <scope>PATHWAY</scope>
    <scope>TISSUE SPECIFICITY</scope>
    <source>
        <tissue>Brain</tissue>
    </source>
</reference>
<reference key="2">
    <citation type="journal article" date="2004" name="Genome Res.">
        <title>The status, quality, and expansion of the NIH full-length cDNA project: the Mammalian Gene Collection (MGC).</title>
        <authorList>
            <consortium name="The MGC Project Team"/>
        </authorList>
    </citation>
    <scope>NUCLEOTIDE SEQUENCE [LARGE SCALE MRNA]</scope>
    <source>
        <strain>C57BL/6J</strain>
        <tissue>Brain</tissue>
    </source>
</reference>
<reference key="3">
    <citation type="journal article" date="1994" name="J. Biol. Chem.">
        <title>Cloning and expression of cDNA for a new type of Gal beta 1,3GalNAc alpha 2,3-sialyltransferase.</title>
        <authorList>
            <person name="Lee Y.-C."/>
            <person name="Kojima N."/>
            <person name="Wada E."/>
            <person name="Kurosawa N."/>
            <person name="Nakaoka T."/>
            <person name="Hamamoto T."/>
            <person name="Tsuji S."/>
        </authorList>
    </citation>
    <scope>FUNCTION</scope>
    <scope>CATALYTIC ACTIVITY</scope>
</reference>
<reference key="4">
    <citation type="journal article" date="1997" name="Glycobiology">
        <title>Mouse beta-galactoside alpha2,3-sialyltransferases: comparison of in vitro substrate specificities and tissue specific expression.</title>
        <authorList>
            <person name="Kono M."/>
            <person name="Ohyama Y."/>
            <person name="Lee Y.-C."/>
            <person name="Hamamoto T."/>
            <person name="Kojima N."/>
            <person name="Tsuji S."/>
        </authorList>
    </citation>
    <scope>FUNCTION</scope>
    <scope>CATALYTIC ACTIVITY</scope>
    <scope>TISSUE SPECIFICITY</scope>
    <scope>BIOPHYSICOCHEMICAL PROPERTIES</scope>
    <source>
        <tissue>Brain</tissue>
    </source>
</reference>
<reference key="5">
    <citation type="journal article" date="2000" name="Immunity">
        <title>The ST3Gal-I sialyltransferase controls CD8+ T lymphocyte homeostasis by modulating O-glycan biosynthesis.</title>
        <authorList>
            <person name="Priatel J.J."/>
            <person name="Chui D."/>
            <person name="Hiraoka N."/>
            <person name="Simmons C.J."/>
            <person name="Richardson K.B."/>
            <person name="Page D.M."/>
            <person name="Fukuda M."/>
            <person name="Varki N.M."/>
            <person name="Marth J.D."/>
        </authorList>
    </citation>
    <scope>FUNCTION</scope>
    <scope>CATALYTIC ACTIVITY</scope>
    <scope>DISRUPTION PHENOTYPE</scope>
    <scope>PATHWAY</scope>
</reference>
<comment type="function">
    <text evidence="4 5 6 7">A beta-galactoside alpha2-&gt;3 sialyltransferase involved in terminal sialylation of glycoproteins and glycolipids (PubMed:8375377, PubMed:9184827). Catalyzes the transfer of sialic acid (N-acetyl-neuraminic acid; Neu5Ac) from the nucleotide sugar donor CMP-Neu5Ac onto acceptor Galbeta-(1-&gt;3)-GalNAc-terminated glycoconjugates through an alpha2-3 linkage (PubMed:10755614, PubMed:8144500, PubMed:8375377, PubMed:9184827). Adds sialic acid to the core 1 O-glycan, Galbeta-(1-&gt;3)-GalNAc-O-Ser/Thr, which is a major structure of mucin-type O-glycans. As part of a homeostatic mechanism that regulates CD8-positive T cell numbers, sialylates core 1 O-glycans of T cell glycoproteins, SPN/CD43 and PTPRC/CD45. Prevents premature apoptosis of thymic CD8-positive T cells prior to peripheral emigration, whereas in the secondary lymphoid organs controls the survival of CD8-positive memory T cells generated following a successful immune response (PubMed:10755614). Transfers sialic acid to asialofetuin, presumably onto Galbeta-(1-&gt;3)-GalNAc-O-Ser (PubMed:8375377). Sialylates GM1a, GA1 and GD1b gangliosides to form GD1a, GM1b and GT1b, respectively (PubMed:8144500, PubMed:8375377, PubMed:9184827).</text>
</comment>
<comment type="catalytic activity">
    <reaction evidence="4 5 6">
        <text>a beta-D-galactosyl-(1-&gt;3)-N-acetyl-alpha-D-galactosaminyl derivative + CMP-N-acetyl-beta-neuraminate = an N-acetyl-alpha-neuraminyl-(2-&gt;3)-beta-D-galactosyl-(1-&gt;3)-N-acetyl-alpha-D-galactosaminyl derivative + CMP + H(+)</text>
        <dbReference type="Rhea" id="RHEA:21616"/>
        <dbReference type="ChEBI" id="CHEBI:15378"/>
        <dbReference type="ChEBI" id="CHEBI:57812"/>
        <dbReference type="ChEBI" id="CHEBI:60377"/>
        <dbReference type="ChEBI" id="CHEBI:133470"/>
        <dbReference type="ChEBI" id="CHEBI:139596"/>
        <dbReference type="EC" id="2.4.3.4"/>
    </reaction>
    <physiologicalReaction direction="left-to-right" evidence="9 10 11">
        <dbReference type="Rhea" id="RHEA:21617"/>
    </physiologicalReaction>
</comment>
<comment type="catalytic activity">
    <reaction evidence="10 11">
        <text>a ganglioside GM1 (d18:1(4E)) + CMP-N-acetyl-beta-neuraminate = a ganglioside GD1a (d18:1(4E)) + CMP + H(+)</text>
        <dbReference type="Rhea" id="RHEA:18021"/>
        <dbReference type="ChEBI" id="CHEBI:15378"/>
        <dbReference type="ChEBI" id="CHEBI:57812"/>
        <dbReference type="ChEBI" id="CHEBI:60377"/>
        <dbReference type="ChEBI" id="CHEBI:77709"/>
        <dbReference type="ChEBI" id="CHEBI:78445"/>
        <dbReference type="EC" id="2.4.3.2"/>
    </reaction>
    <physiologicalReaction direction="left-to-right" evidence="10 11">
        <dbReference type="Rhea" id="RHEA:18022"/>
    </physiologicalReaction>
</comment>
<comment type="catalytic activity">
    <reaction evidence="5 6">
        <text>ganglioside GM1 (d18:1(4E)/18:0) + CMP-N-acetyl-beta-neuraminate = ganglioside GD1a (18:1(4E)/18:0) + CMP + H(+)</text>
        <dbReference type="Rhea" id="RHEA:48248"/>
        <dbReference type="ChEBI" id="CHEBI:15378"/>
        <dbReference type="ChEBI" id="CHEBI:57812"/>
        <dbReference type="ChEBI" id="CHEBI:60377"/>
        <dbReference type="ChEBI" id="CHEBI:73110"/>
        <dbReference type="ChEBI" id="CHEBI:90153"/>
    </reaction>
    <physiologicalReaction direction="left-to-right" evidence="10 11">
        <dbReference type="Rhea" id="RHEA:48249"/>
    </physiologicalReaction>
</comment>
<comment type="catalytic activity">
    <reaction evidence="5 6 7">
        <text>a ganglioside GA1 + CMP-N-acetyl-beta-neuraminate = a ganglioside GM1b + CMP + H(+)</text>
        <dbReference type="Rhea" id="RHEA:48244"/>
        <dbReference type="ChEBI" id="CHEBI:15378"/>
        <dbReference type="ChEBI" id="CHEBI:57812"/>
        <dbReference type="ChEBI" id="CHEBI:60377"/>
        <dbReference type="ChEBI" id="CHEBI:88069"/>
        <dbReference type="ChEBI" id="CHEBI:90151"/>
    </reaction>
    <physiologicalReaction direction="left-to-right" evidence="10">
        <dbReference type="Rhea" id="RHEA:48245"/>
    </physiologicalReaction>
</comment>
<comment type="catalytic activity">
    <reaction evidence="1">
        <text>a ganglioside GA1 (d18:1(4E)) + CMP-N-acetyl-beta-neuraminate = a ganglioside GM1b (d18:1(4E)) + CMP + H(+)</text>
        <dbReference type="Rhea" id="RHEA:47560"/>
        <dbReference type="ChEBI" id="CHEBI:15378"/>
        <dbReference type="ChEBI" id="CHEBI:27938"/>
        <dbReference type="ChEBI" id="CHEBI:57812"/>
        <dbReference type="ChEBI" id="CHEBI:60377"/>
        <dbReference type="ChEBI" id="CHEBI:78568"/>
    </reaction>
    <physiologicalReaction direction="left-to-right" evidence="1">
        <dbReference type="Rhea" id="RHEA:47561"/>
    </physiologicalReaction>
</comment>
<comment type="catalytic activity">
    <reaction evidence="5 6">
        <text>a ganglioside GD1b + CMP-N-acetyl-beta-neuraminate = a ganglioside GT1b + CMP + H(+)</text>
        <dbReference type="Rhea" id="RHEA:48240"/>
        <dbReference type="ChEBI" id="CHEBI:15378"/>
        <dbReference type="ChEBI" id="CHEBI:57812"/>
        <dbReference type="ChEBI" id="CHEBI:60377"/>
        <dbReference type="ChEBI" id="CHEBI:82939"/>
        <dbReference type="ChEBI" id="CHEBI:82940"/>
    </reaction>
    <physiologicalReaction direction="left-to-right" evidence="10">
        <dbReference type="Rhea" id="RHEA:48241"/>
    </physiologicalReaction>
</comment>
<comment type="catalytic activity">
    <reaction evidence="2">
        <text>a 3-O-[beta-D-galactosyl-(1-&gt;3)-N-acetyl-alpha-D-galactosaminyl]-L-threonyl-[protein] + CMP-N-acetyl-beta-neuraminate = a 3-O-[N-acetyl-alpha-neuraminyl-(2-&gt;3)-beta-D-galactosyl-(1-&gt;3)-N-acetyl-alpha-D-galactosaminyl]-L-threonyl-[protein] + CMP + H(+)</text>
        <dbReference type="Rhea" id="RHEA:56208"/>
        <dbReference type="Rhea" id="RHEA-COMP:13923"/>
        <dbReference type="Rhea" id="RHEA-COMP:14417"/>
        <dbReference type="ChEBI" id="CHEBI:15378"/>
        <dbReference type="ChEBI" id="CHEBI:57812"/>
        <dbReference type="ChEBI" id="CHEBI:60377"/>
        <dbReference type="ChEBI" id="CHEBI:137950"/>
        <dbReference type="ChEBI" id="CHEBI:139598"/>
    </reaction>
    <physiologicalReaction direction="left-to-right" evidence="2">
        <dbReference type="Rhea" id="RHEA:56209"/>
    </physiologicalReaction>
</comment>
<comment type="catalytic activity">
    <reaction evidence="2">
        <text>a 3-O-[beta-D-galactosyl-(1-&gt;3)-N-acetyl-alpha-D-galactosaminyl]-L-seryl-[protein] + CMP-N-acetyl-beta-neuraminate = 3-O-[N-acetyl-alpha-neuraminyl-(2-&gt;3)-beta-D-galactosyl-(1-&gt;3)-N-acetyl-alpha-D-galactosaminyl]-L-seryl-[protein] + CMP + H(+)</text>
        <dbReference type="Rhea" id="RHEA:56204"/>
        <dbReference type="Rhea" id="RHEA-COMP:13922"/>
        <dbReference type="Rhea" id="RHEA-COMP:14416"/>
        <dbReference type="ChEBI" id="CHEBI:15378"/>
        <dbReference type="ChEBI" id="CHEBI:57812"/>
        <dbReference type="ChEBI" id="CHEBI:60377"/>
        <dbReference type="ChEBI" id="CHEBI:137949"/>
        <dbReference type="ChEBI" id="CHEBI:139597"/>
    </reaction>
    <physiologicalReaction direction="left-to-right" evidence="2">
        <dbReference type="Rhea" id="RHEA:56205"/>
    </physiologicalReaction>
</comment>
<comment type="biophysicochemical properties">
    <kinetics>
        <KM evidence="7">3.2 mM for Gal-beta-1,3-GlcNAc</KM>
        <KM evidence="7">51 uM for Gal-beta-1,3-GalNAc</KM>
        <KM evidence="6">0.11 mM for Gal-beta-1,3-GalNAc</KM>
        <KM evidence="6">0.03 mM for CMP-N-acetyl-beta-neuraminate</KM>
        <KM evidence="6">1.5 mM for ganglioside GM1</KM>
        <KM evidence="6">0.37 mM for ganglioside GA1</KM>
        <text evidence="7">Vmax is 4 fold higher with Gal-beta-1,3-GalNAc than with Gal-beta-1,3-GlcNAc as substrate.</text>
    </kinetics>
    <phDependence>
        <text evidence="6">Optimum pH is 6.4.</text>
    </phDependence>
</comment>
<comment type="pathway">
    <text evidence="9">Protein modification; protein glycosylation.</text>
</comment>
<comment type="pathway">
    <text evidence="11">Glycolipid biosynthesis.</text>
</comment>
<comment type="subcellular location">
    <subcellularLocation>
        <location evidence="2">Golgi apparatus</location>
        <location evidence="2">Golgi stack membrane</location>
        <topology evidence="3">Single-pass type II membrane protein</topology>
    </subcellularLocation>
    <subcellularLocation>
        <location evidence="2">Golgi apparatus</location>
        <location evidence="2">trans-Golgi network membrane</location>
        <topology evidence="3">Single-pass type II membrane protein</topology>
    </subcellularLocation>
    <subcellularLocation>
        <location>Secreted</location>
    </subcellularLocation>
    <text evidence="2">Membrane-bound form in medial and trans cisternae of Golgi (By similarity). Secreted into the body fluid.</text>
</comment>
<comment type="tissue specificity">
    <text evidence="6">Highly expressed in submaxillary gland and to a much lesser extent in liver, lung, kidney, heart and brain.</text>
</comment>
<comment type="PTM">
    <text>The soluble form derives from the membrane form by proteolytic processing.</text>
</comment>
<comment type="disruption phenotype">
    <text evidence="4">Knockout mice are deficient in CD8-positive T cells due to increased apoptosis. This is associated with a reduction of naive to memory T cells ratio in blood and peripheral lymphoid organs.</text>
</comment>
<comment type="similarity">
    <text evidence="8">Belongs to the glycosyltransferase 29 family.</text>
</comment>
<comment type="online information" name="Functional Glycomics Gateway - GTase">
    <link uri="http://www.functionalglycomics.org/glycomics/molecule/jsp/glycoEnzyme/viewGlycoEnzyme.jsp?gbpId=gt_mou_642"/>
    <text>ST3Gal I</text>
</comment>
<dbReference type="EC" id="2.4.3.4" evidence="4 5 6"/>
<dbReference type="EC" id="2.4.3.2" evidence="10 11"/>
<dbReference type="EMBL" id="X73523">
    <property type="protein sequence ID" value="CAA51919.1"/>
    <property type="molecule type" value="mRNA"/>
</dbReference>
<dbReference type="EMBL" id="BC084730">
    <property type="protein sequence ID" value="AAH84730.1"/>
    <property type="molecule type" value="mRNA"/>
</dbReference>
<dbReference type="CCDS" id="CCDS27511.1"/>
<dbReference type="PIR" id="S36824">
    <property type="entry name" value="S36824"/>
</dbReference>
<dbReference type="RefSeq" id="NP_001399564.1">
    <property type="nucleotide sequence ID" value="NM_001412635.1"/>
</dbReference>
<dbReference type="RefSeq" id="NP_001399565.1">
    <property type="nucleotide sequence ID" value="NM_001412636.1"/>
</dbReference>
<dbReference type="RefSeq" id="NP_001399566.1">
    <property type="nucleotide sequence ID" value="NM_001412637.1"/>
</dbReference>
<dbReference type="RefSeq" id="NP_033203.1">
    <property type="nucleotide sequence ID" value="NM_009177.5"/>
</dbReference>
<dbReference type="RefSeq" id="XP_006520727.1">
    <property type="nucleotide sequence ID" value="XM_006520664.5"/>
</dbReference>
<dbReference type="RefSeq" id="XP_006520728.1">
    <property type="nucleotide sequence ID" value="XM_006520665.3"/>
</dbReference>
<dbReference type="RefSeq" id="XP_011243831.1">
    <property type="nucleotide sequence ID" value="XM_011245529.2"/>
</dbReference>
<dbReference type="RefSeq" id="XP_036015180.1">
    <property type="nucleotide sequence ID" value="XM_036159287.1"/>
</dbReference>
<dbReference type="SMR" id="P54751"/>
<dbReference type="FunCoup" id="P54751">
    <property type="interactions" value="107"/>
</dbReference>
<dbReference type="STRING" id="10090.ENSMUSP00000154853"/>
<dbReference type="SwissLipids" id="SLP:000001413"/>
<dbReference type="CAZy" id="GT29">
    <property type="family name" value="Glycosyltransferase Family 29"/>
</dbReference>
<dbReference type="GlyCosmos" id="P54751">
    <property type="glycosylation" value="3 sites, No reported glycans"/>
</dbReference>
<dbReference type="GlyGen" id="P54751">
    <property type="glycosylation" value="3 sites, 2 N-linked glycans (2 sites)"/>
</dbReference>
<dbReference type="iPTMnet" id="P54751"/>
<dbReference type="PhosphoSitePlus" id="P54751"/>
<dbReference type="PaxDb" id="10090-ENSMUSP00000090307"/>
<dbReference type="PeptideAtlas" id="P54751"/>
<dbReference type="ProteomicsDB" id="257231"/>
<dbReference type="Pumba" id="P54751"/>
<dbReference type="Antibodypedia" id="27484">
    <property type="antibodies" value="67 antibodies from 17 providers"/>
</dbReference>
<dbReference type="DNASU" id="20442"/>
<dbReference type="Ensembl" id="ENSMUST00000092640.6">
    <property type="protein sequence ID" value="ENSMUSP00000090307.6"/>
    <property type="gene ID" value="ENSMUSG00000013846.11"/>
</dbReference>
<dbReference type="Ensembl" id="ENSMUST00000229028.2">
    <property type="protein sequence ID" value="ENSMUSP00000154853.2"/>
    <property type="gene ID" value="ENSMUSG00000013846.11"/>
</dbReference>
<dbReference type="Ensembl" id="ENSMUST00000229213.2">
    <property type="protein sequence ID" value="ENSMUSP00000155359.2"/>
    <property type="gene ID" value="ENSMUSG00000013846.11"/>
</dbReference>
<dbReference type="GeneID" id="20442"/>
<dbReference type="KEGG" id="mmu:20442"/>
<dbReference type="UCSC" id="uc007wba.1">
    <property type="organism name" value="mouse"/>
</dbReference>
<dbReference type="AGR" id="MGI:98304"/>
<dbReference type="CTD" id="6482"/>
<dbReference type="MGI" id="MGI:98304">
    <property type="gene designation" value="St3gal1"/>
</dbReference>
<dbReference type="VEuPathDB" id="HostDB:ENSMUSG00000013846"/>
<dbReference type="eggNOG" id="KOG2692">
    <property type="taxonomic scope" value="Eukaryota"/>
</dbReference>
<dbReference type="GeneTree" id="ENSGT00940000154725"/>
<dbReference type="HOGENOM" id="CLU_032020_2_1_1"/>
<dbReference type="InParanoid" id="P54751"/>
<dbReference type="OMA" id="RPCSCHT"/>
<dbReference type="OrthoDB" id="10264956at2759"/>
<dbReference type="PhylomeDB" id="P54751"/>
<dbReference type="TreeFam" id="TF354325"/>
<dbReference type="BRENDA" id="2.4.99.2">
    <property type="organism ID" value="3474"/>
</dbReference>
<dbReference type="Reactome" id="R-MMU-2022854">
    <property type="pathway name" value="Keratan sulfate biosynthesis"/>
</dbReference>
<dbReference type="Reactome" id="R-MMU-4085001">
    <property type="pathway name" value="Sialic acid metabolism"/>
</dbReference>
<dbReference type="Reactome" id="R-MMU-977068">
    <property type="pathway name" value="Termination of O-glycan biosynthesis"/>
</dbReference>
<dbReference type="UniPathway" id="UPA00378"/>
<dbReference type="BioGRID-ORCS" id="20442">
    <property type="hits" value="3 hits in 79 CRISPR screens"/>
</dbReference>
<dbReference type="ChiTaRS" id="St3gal1">
    <property type="organism name" value="mouse"/>
</dbReference>
<dbReference type="PRO" id="PR:P54751"/>
<dbReference type="Proteomes" id="UP000000589">
    <property type="component" value="Chromosome 15"/>
</dbReference>
<dbReference type="RNAct" id="P54751">
    <property type="molecule type" value="protein"/>
</dbReference>
<dbReference type="Bgee" id="ENSMUSG00000013846">
    <property type="expression patterns" value="Expressed in cortical plate and 186 other cell types or tissues"/>
</dbReference>
<dbReference type="ExpressionAtlas" id="P54751">
    <property type="expression patterns" value="baseline and differential"/>
</dbReference>
<dbReference type="GO" id="GO:0005576">
    <property type="term" value="C:extracellular region"/>
    <property type="evidence" value="ECO:0007669"/>
    <property type="project" value="UniProtKB-SubCell"/>
</dbReference>
<dbReference type="GO" id="GO:1990675">
    <property type="term" value="C:Golgi medial cisterna membrane"/>
    <property type="evidence" value="ECO:0000250"/>
    <property type="project" value="UniProtKB"/>
</dbReference>
<dbReference type="GO" id="GO:1990676">
    <property type="term" value="C:Golgi trans cisterna membrane"/>
    <property type="evidence" value="ECO:0000250"/>
    <property type="project" value="UniProtKB"/>
</dbReference>
<dbReference type="GO" id="GO:0032588">
    <property type="term" value="C:trans-Golgi network membrane"/>
    <property type="evidence" value="ECO:0000250"/>
    <property type="project" value="UniProtKB"/>
</dbReference>
<dbReference type="GO" id="GO:0047288">
    <property type="term" value="F:beta-D-galactosyl-(1-&gt;3)-N-acetyl-beta-D-galactosaminide alpha-2,3- sialyltransferase"/>
    <property type="evidence" value="ECO:0007669"/>
    <property type="project" value="RHEA"/>
</dbReference>
<dbReference type="GO" id="GO:0003836">
    <property type="term" value="F:beta-galactoside (CMP) alpha-2,3-sialyltransferase activity"/>
    <property type="evidence" value="ECO:0000314"/>
    <property type="project" value="UniProtKB"/>
</dbReference>
<dbReference type="GO" id="GO:0010706">
    <property type="term" value="P:ganglioside biosynthetic process via lactosylceramide"/>
    <property type="evidence" value="ECO:0000314"/>
    <property type="project" value="UniProtKB"/>
</dbReference>
<dbReference type="GO" id="GO:0002319">
    <property type="term" value="P:memory B cell differentiation"/>
    <property type="evidence" value="ECO:0000315"/>
    <property type="project" value="UniProtKB"/>
</dbReference>
<dbReference type="GO" id="GO:0006054">
    <property type="term" value="P:N-acetylneuraminate metabolic process"/>
    <property type="evidence" value="ECO:0000250"/>
    <property type="project" value="UniProtKB"/>
</dbReference>
<dbReference type="GO" id="GO:1905403">
    <property type="term" value="P:negative regulation of activated CD8-positive, alpha-beta T cell apoptotic process"/>
    <property type="evidence" value="ECO:0000315"/>
    <property type="project" value="UniProtKB"/>
</dbReference>
<dbReference type="GO" id="GO:0006486">
    <property type="term" value="P:protein glycosylation"/>
    <property type="evidence" value="ECO:0000314"/>
    <property type="project" value="MGI"/>
</dbReference>
<dbReference type="GO" id="GO:0006487">
    <property type="term" value="P:protein N-linked glycosylation"/>
    <property type="evidence" value="ECO:0000250"/>
    <property type="project" value="UniProtKB"/>
</dbReference>
<dbReference type="GO" id="GO:1990743">
    <property type="term" value="P:protein sialylation"/>
    <property type="evidence" value="ECO:0000314"/>
    <property type="project" value="UniProtKB"/>
</dbReference>
<dbReference type="GO" id="GO:0097503">
    <property type="term" value="P:sialylation"/>
    <property type="evidence" value="ECO:0000250"/>
    <property type="project" value="UniProtKB"/>
</dbReference>
<dbReference type="FunFam" id="3.90.1480.20:FF:000034">
    <property type="entry name" value="CMP-N-acetylneuraminate-beta-galactosamide-alpha-2,3-sialyltransferase 1"/>
    <property type="match status" value="1"/>
</dbReference>
<dbReference type="Gene3D" id="3.90.1480.20">
    <property type="entry name" value="Glycosyl transferase family 29"/>
    <property type="match status" value="1"/>
</dbReference>
<dbReference type="InterPro" id="IPR051757">
    <property type="entry name" value="Beta-gal_alpha2-3_sialyltrans"/>
</dbReference>
<dbReference type="InterPro" id="IPR001675">
    <property type="entry name" value="Glyco_trans_29"/>
</dbReference>
<dbReference type="InterPro" id="IPR038578">
    <property type="entry name" value="GT29-like_sf"/>
</dbReference>
<dbReference type="InterPro" id="IPR012163">
    <property type="entry name" value="Sialyl_trans"/>
</dbReference>
<dbReference type="PANTHER" id="PTHR46032">
    <property type="entry name" value="ALPHA-2,3-SIALYLTRANSFERASE ST3GAL I ISOFORM X1"/>
    <property type="match status" value="1"/>
</dbReference>
<dbReference type="PANTHER" id="PTHR46032:SF6">
    <property type="entry name" value="CMP-N-ACETYLNEURAMINATE-BETA-GALACTOSAMIDE-ALPHA-2,3-SIALYLTRANSFERASE 1"/>
    <property type="match status" value="1"/>
</dbReference>
<dbReference type="Pfam" id="PF00777">
    <property type="entry name" value="Glyco_transf_29"/>
    <property type="match status" value="1"/>
</dbReference>
<dbReference type="PIRSF" id="PIRSF005557">
    <property type="entry name" value="Sialyl_trans"/>
    <property type="match status" value="1"/>
</dbReference>
<evidence type="ECO:0000250" key="1">
    <source>
        <dbReference type="UniProtKB" id="Q02745"/>
    </source>
</evidence>
<evidence type="ECO:0000250" key="2">
    <source>
        <dbReference type="UniProtKB" id="Q11201"/>
    </source>
</evidence>
<evidence type="ECO:0000255" key="3"/>
<evidence type="ECO:0000269" key="4">
    <source>
    </source>
</evidence>
<evidence type="ECO:0000269" key="5">
    <source>
    </source>
</evidence>
<evidence type="ECO:0000269" key="6">
    <source>
    </source>
</evidence>
<evidence type="ECO:0000269" key="7">
    <source>
    </source>
</evidence>
<evidence type="ECO:0000305" key="8"/>
<evidence type="ECO:0000305" key="9">
    <source>
    </source>
</evidence>
<evidence type="ECO:0000305" key="10">
    <source>
    </source>
</evidence>
<evidence type="ECO:0000305" key="11">
    <source>
    </source>
</evidence>